<protein>
    <recommendedName>
        <fullName evidence="1">Maturase K</fullName>
    </recommendedName>
    <alternativeName>
        <fullName evidence="1">Intron maturase</fullName>
    </alternativeName>
</protein>
<accession>O63071</accession>
<gene>
    <name evidence="1" type="primary">matK</name>
    <name type="synonym">ycf14</name>
</gene>
<keyword id="KW-0150">Chloroplast</keyword>
<keyword id="KW-0507">mRNA processing</keyword>
<keyword id="KW-0934">Plastid</keyword>
<keyword id="KW-0694">RNA-binding</keyword>
<keyword id="KW-0819">tRNA processing</keyword>
<evidence type="ECO:0000255" key="1">
    <source>
        <dbReference type="HAMAP-Rule" id="MF_01390"/>
    </source>
</evidence>
<dbReference type="EMBL" id="AF133915">
    <property type="protein sequence ID" value="AAD21641.1"/>
    <property type="molecule type" value="Genomic_DNA"/>
</dbReference>
<dbReference type="EMBL" id="AF133916">
    <property type="protein sequence ID" value="AAD21642.1"/>
    <property type="molecule type" value="Genomic_DNA"/>
</dbReference>
<dbReference type="EMBL" id="AF133917">
    <property type="protein sequence ID" value="AAD21643.1"/>
    <property type="molecule type" value="Genomic_DNA"/>
</dbReference>
<dbReference type="EMBL" id="AF133918">
    <property type="protein sequence ID" value="AAD21644.1"/>
    <property type="molecule type" value="Genomic_DNA"/>
</dbReference>
<dbReference type="GO" id="GO:0009507">
    <property type="term" value="C:chloroplast"/>
    <property type="evidence" value="ECO:0007669"/>
    <property type="project" value="UniProtKB-SubCell"/>
</dbReference>
<dbReference type="GO" id="GO:0003723">
    <property type="term" value="F:RNA binding"/>
    <property type="evidence" value="ECO:0007669"/>
    <property type="project" value="UniProtKB-KW"/>
</dbReference>
<dbReference type="GO" id="GO:0006397">
    <property type="term" value="P:mRNA processing"/>
    <property type="evidence" value="ECO:0007669"/>
    <property type="project" value="UniProtKB-KW"/>
</dbReference>
<dbReference type="GO" id="GO:0008380">
    <property type="term" value="P:RNA splicing"/>
    <property type="evidence" value="ECO:0007669"/>
    <property type="project" value="UniProtKB-UniRule"/>
</dbReference>
<dbReference type="GO" id="GO:0008033">
    <property type="term" value="P:tRNA processing"/>
    <property type="evidence" value="ECO:0007669"/>
    <property type="project" value="UniProtKB-KW"/>
</dbReference>
<dbReference type="HAMAP" id="MF_01390">
    <property type="entry name" value="MatK"/>
    <property type="match status" value="1"/>
</dbReference>
<dbReference type="InterPro" id="IPR024937">
    <property type="entry name" value="Domain_X"/>
</dbReference>
<dbReference type="InterPro" id="IPR002866">
    <property type="entry name" value="Maturase_MatK"/>
</dbReference>
<dbReference type="InterPro" id="IPR024942">
    <property type="entry name" value="Maturase_MatK_N"/>
</dbReference>
<dbReference type="PANTHER" id="PTHR34811">
    <property type="entry name" value="MATURASE K"/>
    <property type="match status" value="1"/>
</dbReference>
<dbReference type="PANTHER" id="PTHR34811:SF1">
    <property type="entry name" value="MATURASE K"/>
    <property type="match status" value="1"/>
</dbReference>
<dbReference type="Pfam" id="PF01348">
    <property type="entry name" value="Intron_maturas2"/>
    <property type="match status" value="1"/>
</dbReference>
<dbReference type="Pfam" id="PF01824">
    <property type="entry name" value="MatK_N"/>
    <property type="match status" value="1"/>
</dbReference>
<sequence>MDEFHRYGKEDSSWQQCFLYPLFFQEDLYAISHDHYLDGSSSSEPMEHLSSNDQFSFLTVKRLIGQIRQQNHSIVLFVNCDPNPLVDRKKSSYSESVLEGLTLVLEVPFSIRSKYSVEGMNEWKSFRSIHSIFPFLEDKFPHSNYVSDTRIPYSIHPEILVRTFRRWIGDAPSLHPLRSILYEYRNSSESLQRSIIVVPKVNTRFFLFLWNNYVYECESILVSLLKRSSHSRSLSHGSFPQRTHFHRKIKNIFLFSRRNSFQSIWSLKDPNIHYVRYGERSIIAIKGTHLLVKKYRYYLPIFRQCYFHLWNEPYRVCFHQLSKNCSSSLGYFLRVRMKPLLVKTKMLDELFIADLITDEFDPIVPIVPIIGLLSREKFCDISGRPISKLSWTSLTDDDILDRFDRIWRNLFHYYSGSFGRDGLYRIKYILSLSCAKTLACKHKSTIRVVRKELGPELFKKSFSKERELDSPPFSSKAAARSQRERIWHSDIPQINPLAHSWQKIQDLKIENLFDQ</sequence>
<geneLocation type="chloroplast"/>
<name>MATK_PICRU</name>
<proteinExistence type="inferred from homology"/>
<organism>
    <name type="scientific">Picea rubens</name>
    <name type="common">Red spruce</name>
    <name type="synonym">Picea australis</name>
    <dbReference type="NCBI Taxonomy" id="3333"/>
    <lineage>
        <taxon>Eukaryota</taxon>
        <taxon>Viridiplantae</taxon>
        <taxon>Streptophyta</taxon>
        <taxon>Embryophyta</taxon>
        <taxon>Tracheophyta</taxon>
        <taxon>Spermatophyta</taxon>
        <taxon>Pinopsida</taxon>
        <taxon>Pinidae</taxon>
        <taxon>Conifers I</taxon>
        <taxon>Pinales</taxon>
        <taxon>Pinaceae</taxon>
        <taxon>Picea</taxon>
    </lineage>
</organism>
<feature type="chain" id="PRO_0000143600" description="Maturase K">
    <location>
        <begin position="1"/>
        <end position="515"/>
    </location>
</feature>
<comment type="function">
    <text evidence="1">Usually encoded in the trnK tRNA gene intron. Probably assists in splicing its own and other chloroplast group II introns.</text>
</comment>
<comment type="subcellular location">
    <subcellularLocation>
        <location>Plastid</location>
        <location>Chloroplast</location>
    </subcellularLocation>
</comment>
<comment type="similarity">
    <text evidence="1">Belongs to the intron maturase 2 family. MatK subfamily.</text>
</comment>
<reference key="1">
    <citation type="journal article" date="1999" name="Theor. Appl. Genet.">
        <title>Species-specific nuclear and chloroplast single nucleotide polymorphisms to distinguish Picea glauca, P. mariana and P. rubens.</title>
        <authorList>
            <person name="Germano J."/>
            <person name="Klein A.S."/>
        </authorList>
        <dbReference type="AGRICOLA" id="IND22025547"/>
    </citation>
    <scope>NUCLEOTIDE SEQUENCE [GENOMIC DNA]</scope>
</reference>